<evidence type="ECO:0000269" key="1">
    <source>
    </source>
</evidence>
<evidence type="ECO:0000303" key="2">
    <source>
    </source>
</evidence>
<evidence type="ECO:0000305" key="3"/>
<evidence type="ECO:0000305" key="4">
    <source>
    </source>
</evidence>
<evidence type="ECO:0000305" key="5">
    <source>
    </source>
</evidence>
<evidence type="ECO:0000312" key="6">
    <source>
        <dbReference type="EMBL" id="ABG92279.1"/>
    </source>
</evidence>
<evidence type="ECO:0000312" key="7">
    <source>
        <dbReference type="Proteomes" id="UP000008710"/>
    </source>
</evidence>
<reference key="1">
    <citation type="journal article" date="2006" name="Proc. Natl. Acad. Sci. U.S.A.">
        <title>The complete genome of Rhodococcus sp. RHA1 provides insights into a catabolic powerhouse.</title>
        <authorList>
            <person name="McLeod M.P."/>
            <person name="Warren R.L."/>
            <person name="Hsiao W.W.L."/>
            <person name="Araki N."/>
            <person name="Myhre M."/>
            <person name="Fernandes C."/>
            <person name="Miyazawa D."/>
            <person name="Wong W."/>
            <person name="Lillquist A.L."/>
            <person name="Wang D."/>
            <person name="Dosanjh M."/>
            <person name="Hara H."/>
            <person name="Petrescu A."/>
            <person name="Morin R.D."/>
            <person name="Yang G."/>
            <person name="Stott J.M."/>
            <person name="Schein J.E."/>
            <person name="Shin H."/>
            <person name="Smailus D."/>
            <person name="Siddiqui A.S."/>
            <person name="Marra M.A."/>
            <person name="Jones S.J.M."/>
            <person name="Holt R."/>
            <person name="Brinkman F.S.L."/>
            <person name="Miyauchi K."/>
            <person name="Fukuda M."/>
            <person name="Davies J.E."/>
            <person name="Mohn W.W."/>
            <person name="Eltis L.D."/>
        </authorList>
    </citation>
    <scope>NUCLEOTIDE SEQUENCE [LARGE SCALE GENOMIC DNA]</scope>
    <source>
        <strain evidence="7">RHA1</strain>
    </source>
</reference>
<reference key="2">
    <citation type="journal article" date="2007" name="Appl. Environ. Microbiol.">
        <title>An inducible propane monooxygenase is responsible for N-nitrosodimethylamine degradation by Rhodococcus sp. strain RHA1.</title>
        <authorList>
            <person name="Sharp J.O."/>
            <person name="Sales C.M."/>
            <person name="LeBlanc J.C."/>
            <person name="Liu J."/>
            <person name="Wood T.K."/>
            <person name="Eltis L.D."/>
            <person name="Mohn W.W."/>
            <person name="Alvarez-Cohen L."/>
        </authorList>
    </citation>
    <scope>FUNCTION</scope>
    <scope>CATALYTIC ACTIVITY</scope>
    <scope>INDUCTION BY PROPANE</scope>
    <scope>SUBSTRATE SPECIFICITY</scope>
    <scope>SUBUNIT</scope>
    <source>
        <strain>RHA1</strain>
    </source>
</reference>
<reference key="3">
    <citation type="journal article" date="2013" name="FEBS J.">
        <title>The mycobacterial binuclear iron monooxygenases require a specific chaperonin-like protein for functional expression in a heterologous host.</title>
        <authorList>
            <person name="Furuya T."/>
            <person name="Hayashi M."/>
            <person name="Semba H."/>
            <person name="Kino K."/>
        </authorList>
    </citation>
    <scope>SUBUNIT</scope>
</reference>
<proteinExistence type="evidence at protein level"/>
<feature type="chain" id="PRO_0000442965" description="Propane 2-monooxygenase, hydroxylase component small subunit">
    <location>
        <begin position="1"/>
        <end position="368"/>
    </location>
</feature>
<comment type="function">
    <text evidence="1">Component of the propane 2-monooxygenase multicomponent enzyme system which is involved in the degradation of propane via the O2-dependent hydroxylation of propane. Also able to catalyze the oxidation the water contaminant N-nitrosodimethylamine (NDMA).</text>
</comment>
<comment type="catalytic activity">
    <reaction evidence="4">
        <text>propane + NADH + O2 + H(+) = propan-2-ol + NAD(+) + H2O</text>
        <dbReference type="Rhea" id="RHEA:49992"/>
        <dbReference type="ChEBI" id="CHEBI:15377"/>
        <dbReference type="ChEBI" id="CHEBI:15378"/>
        <dbReference type="ChEBI" id="CHEBI:15379"/>
        <dbReference type="ChEBI" id="CHEBI:17824"/>
        <dbReference type="ChEBI" id="CHEBI:32879"/>
        <dbReference type="ChEBI" id="CHEBI:57540"/>
        <dbReference type="ChEBI" id="CHEBI:57945"/>
        <dbReference type="EC" id="1.14.13.227"/>
    </reaction>
</comment>
<comment type="subunit">
    <text evidence="4 5">The propane 2-monooxygenase multicomponent enzyme system is composed of an electron transfer component and a monooxygenase component interacting with the effector protein PrmD. The electron transfer component is composed of a reductase (PrmB), and the monooxygenase component is formed by a large subunit (PrmA) and a small subunit (PrmC) (PubMed:17873074). Probably requires the presence of the chaperonin-like protein PrmG to ensure a productive folding, resulting of a soluble PrmC, which leads to the active form of PrmABCD (PubMed:23171424).</text>
</comment>
<comment type="induction">
    <text evidence="1">By propane.</text>
</comment>
<comment type="similarity">
    <text evidence="3">Belongs to the TmoE/XamoE family.</text>
</comment>
<protein>
    <recommendedName>
        <fullName evidence="2">Propane 2-monooxygenase, hydroxylase component small subunit</fullName>
        <shortName evidence="2">PrMO</shortName>
        <ecNumber evidence="4">1.14.13.227</ecNumber>
    </recommendedName>
</protein>
<organism>
    <name type="scientific">Rhodococcus jostii (strain RHA1)</name>
    <dbReference type="NCBI Taxonomy" id="101510"/>
    <lineage>
        <taxon>Bacteria</taxon>
        <taxon>Bacillati</taxon>
        <taxon>Actinomycetota</taxon>
        <taxon>Actinomycetes</taxon>
        <taxon>Mycobacteriales</taxon>
        <taxon>Nocardiaceae</taxon>
        <taxon>Rhodococcus</taxon>
    </lineage>
</organism>
<sequence>MTATAESKQRSFPKIEFTDSEAGALEFPSSRSRTFTYYTPAKKRSTMYEDVTVDVQPDPDRHLSQGWIYGFGDGPGGYPQEWTAAKSSNWHAFLDPNEEWDQTIYRNNSKVVHQVELCLSNAKRARVYDGWNTPWLTFISRNLGAWMHAENGLALHVFTSIQRSCPTNMINTAVAVNAAHKMRFAQDLALFNLDLSEATENFDGTAHKEVWQSAPEWQPTREVVERLTAVPDWCELLFGSNIVFEQLVGTLFRSELVMQIAAGNGDYITPTIVGTGEHDYDRDLAYTRNLFRLLTRDPEHGEANKELFGTWLAIWVPRCLDAARALQPIWSQPADKAITFATSFDAATDKFRSLLEDLGLDIPKELDQ</sequence>
<keyword id="KW-0503">Monooxygenase</keyword>
<keyword id="KW-0520">NAD</keyword>
<keyword id="KW-0560">Oxidoreductase</keyword>
<name>PRMC_RHOJR</name>
<gene>
    <name evidence="2" type="primary">prmC</name>
    <name evidence="6" type="ordered locus">RHA1_ro00443</name>
</gene>
<accession>Q0SJK7</accession>
<dbReference type="EC" id="1.14.13.227" evidence="4"/>
<dbReference type="EMBL" id="CP000431">
    <property type="protein sequence ID" value="ABG92279.1"/>
    <property type="molecule type" value="Genomic_DNA"/>
</dbReference>
<dbReference type="RefSeq" id="WP_011593716.1">
    <property type="nucleotide sequence ID" value="NC_008268.1"/>
</dbReference>
<dbReference type="SMR" id="Q0SJK7"/>
<dbReference type="KEGG" id="rha:RHA1_ro00443"/>
<dbReference type="PATRIC" id="fig|101510.16.peg.471"/>
<dbReference type="eggNOG" id="ENOG502Z7Z9">
    <property type="taxonomic scope" value="Bacteria"/>
</dbReference>
<dbReference type="HOGENOM" id="CLU_061948_1_0_11"/>
<dbReference type="OrthoDB" id="9806768at2"/>
<dbReference type="Proteomes" id="UP000008710">
    <property type="component" value="Chromosome"/>
</dbReference>
<dbReference type="GO" id="GO:0016709">
    <property type="term" value="F:oxidoreductase activity, acting on paired donors, with incorporation or reduction of molecular oxygen, NAD(P)H as one donor, and incorporation of one atom of oxygen"/>
    <property type="evidence" value="ECO:0007669"/>
    <property type="project" value="InterPro"/>
</dbReference>
<dbReference type="CDD" id="cd01058">
    <property type="entry name" value="AAMH_B"/>
    <property type="match status" value="1"/>
</dbReference>
<dbReference type="Gene3D" id="1.10.620.20">
    <property type="entry name" value="Ribonucleotide Reductase, subunit A"/>
    <property type="match status" value="1"/>
</dbReference>
<dbReference type="InterPro" id="IPR009078">
    <property type="entry name" value="Ferritin-like_SF"/>
</dbReference>
<dbReference type="InterPro" id="IPR012078">
    <property type="entry name" value="MP_mOase_hydro"/>
</dbReference>
<dbReference type="InterPro" id="IPR003430">
    <property type="entry name" value="Phenol_Hydrox"/>
</dbReference>
<dbReference type="InterPro" id="IPR012348">
    <property type="entry name" value="RNR-like"/>
</dbReference>
<dbReference type="Pfam" id="PF02332">
    <property type="entry name" value="Phenol_Hydrox"/>
    <property type="match status" value="1"/>
</dbReference>
<dbReference type="PIRSF" id="PIRSF000040">
    <property type="entry name" value="MMOH_comp"/>
    <property type="match status" value="1"/>
</dbReference>
<dbReference type="SUPFAM" id="SSF47240">
    <property type="entry name" value="Ferritin-like"/>
    <property type="match status" value="1"/>
</dbReference>